<comment type="function">
    <text evidence="1">Proton-conducting pore forming subunit of the V0 complex of vacuolar(H+)-ATPase (V-ATPase), a multisubunit enzyme composed of a peripheral complex (V1) that hydrolyzes ATP and a membrane integral complex (V0) that translocates protons (By similarity). V-ATPase is responsible for acidifying and maintaining the pH of intracellular compartments (By similarity).</text>
</comment>
<comment type="subunit">
    <text evidence="1">V-ATPase is a heteromultimeric enzyme composed of a peripheral catalytic V1 complex (components A to H) attached to an integral membrane V0 proton pore complex (components: a, c, c', c'', d, e, f and VOA1) (By similarity). The decameric c-ring forms the proton-conducting pore, and is composed of eight proteolipid subunits c, one subunit c' and one subunit c'' (By similarity).</text>
</comment>
<comment type="subcellular location">
    <subcellularLocation>
        <location evidence="1">Vacuole membrane</location>
        <topology evidence="2">Multi-pass membrane protein</topology>
    </subcellularLocation>
</comment>
<comment type="similarity">
    <text evidence="3">Belongs to the V-ATPase proteolipid subunit family.</text>
</comment>
<sequence>MSTDLCPVYAPFFGVMGCTAAIVFASFGAAYGTAKAGVGISAMGVLRPDLIVKNTIPVVMAGIIAIYGLVVSVLISGNLKQILSLYSGFIQLGAGLSVGLAGLAAGFAIGIVGDAGVRGTAQQPRLFVAMILILIFAEVLGLYGLIVALLLNTRATDNVTC</sequence>
<feature type="chain" id="PRO_0000071761" description="V-type proton ATPase subunit c">
    <location>
        <begin position="1"/>
        <end position="161"/>
    </location>
</feature>
<feature type="topological domain" description="Lumenal" evidence="2">
    <location>
        <begin position="1"/>
        <end position="9"/>
    </location>
</feature>
<feature type="transmembrane region" description="Helical" evidence="2">
    <location>
        <begin position="10"/>
        <end position="32"/>
    </location>
</feature>
<feature type="topological domain" description="Cytoplasmic" evidence="2">
    <location>
        <begin position="33"/>
        <end position="54"/>
    </location>
</feature>
<feature type="transmembrane region" description="Helical" evidence="2">
    <location>
        <begin position="55"/>
        <end position="75"/>
    </location>
</feature>
<feature type="topological domain" description="Lumenal" evidence="2">
    <location>
        <begin position="76"/>
        <end position="91"/>
    </location>
</feature>
<feature type="transmembrane region" description="Helical" evidence="2">
    <location>
        <begin position="92"/>
        <end position="113"/>
    </location>
</feature>
<feature type="topological domain" description="Cytoplasmic" evidence="2">
    <location>
        <begin position="114"/>
        <end position="125"/>
    </location>
</feature>
<feature type="transmembrane region" description="Helical" evidence="2">
    <location>
        <begin position="126"/>
        <end position="151"/>
    </location>
</feature>
<feature type="topological domain" description="Lumenal" evidence="2">
    <location>
        <begin position="152"/>
        <end position="161"/>
    </location>
</feature>
<feature type="site" description="Essential for proton translocation" evidence="1">
    <location>
        <position position="138"/>
    </location>
</feature>
<proteinExistence type="inferred from homology"/>
<protein>
    <recommendedName>
        <fullName evidence="1">V-type proton ATPase subunit c</fullName>
        <shortName evidence="1">V-ATPase subunit c</shortName>
    </recommendedName>
    <alternativeName>
        <fullName>V-type proton ATPase 16 kDa proteolipid subunit</fullName>
        <shortName>V-ATPase 16 kDa proteolipid subunit</shortName>
    </alternativeName>
    <alternativeName>
        <fullName evidence="1">Vacuolar proton pump c subunit</fullName>
    </alternativeName>
</protein>
<dbReference type="EMBL" id="X59947">
    <property type="protein sequence ID" value="CAA42572.1"/>
    <property type="molecule type" value="Genomic_DNA"/>
</dbReference>
<dbReference type="EMBL" id="CU329670">
    <property type="protein sequence ID" value="CAB11240.1"/>
    <property type="molecule type" value="Genomic_DNA"/>
</dbReference>
<dbReference type="PIR" id="S32970">
    <property type="entry name" value="S32970"/>
</dbReference>
<dbReference type="RefSeq" id="NP_594799.1">
    <property type="nucleotide sequence ID" value="NM_001020227.2"/>
</dbReference>
<dbReference type="SMR" id="P50515"/>
<dbReference type="BioGRID" id="278932">
    <property type="interactions" value="2"/>
</dbReference>
<dbReference type="FunCoup" id="P50515">
    <property type="interactions" value="166"/>
</dbReference>
<dbReference type="STRING" id="284812.P50515"/>
<dbReference type="PaxDb" id="4896-SPAC1B3.14.1"/>
<dbReference type="EnsemblFungi" id="SPAC1B3.14.1">
    <property type="protein sequence ID" value="SPAC1B3.14.1:pep"/>
    <property type="gene ID" value="SPAC1B3.14"/>
</dbReference>
<dbReference type="GeneID" id="2542471"/>
<dbReference type="KEGG" id="spo:2542471"/>
<dbReference type="PomBase" id="SPAC1B3.14">
    <property type="gene designation" value="vma3"/>
</dbReference>
<dbReference type="VEuPathDB" id="FungiDB:SPAC1B3.14"/>
<dbReference type="eggNOG" id="KOG0232">
    <property type="taxonomic scope" value="Eukaryota"/>
</dbReference>
<dbReference type="HOGENOM" id="CLU_085752_1_2_1"/>
<dbReference type="InParanoid" id="P50515"/>
<dbReference type="OMA" id="MGVMKPD"/>
<dbReference type="PhylomeDB" id="P50515"/>
<dbReference type="Reactome" id="R-SPO-1222556">
    <property type="pathway name" value="ROS and RNS production in phagocytes"/>
</dbReference>
<dbReference type="Reactome" id="R-SPO-6798695">
    <property type="pathway name" value="Neutrophil degranulation"/>
</dbReference>
<dbReference type="Reactome" id="R-SPO-77387">
    <property type="pathway name" value="Insulin receptor recycling"/>
</dbReference>
<dbReference type="Reactome" id="R-SPO-917977">
    <property type="pathway name" value="Transferrin endocytosis and recycling"/>
</dbReference>
<dbReference type="Reactome" id="R-SPO-9639288">
    <property type="pathway name" value="Amino acids regulate mTORC1"/>
</dbReference>
<dbReference type="PRO" id="PR:P50515"/>
<dbReference type="Proteomes" id="UP000002485">
    <property type="component" value="Chromosome I"/>
</dbReference>
<dbReference type="GO" id="GO:0005783">
    <property type="term" value="C:endoplasmic reticulum"/>
    <property type="evidence" value="ECO:0007005"/>
    <property type="project" value="PomBase"/>
</dbReference>
<dbReference type="GO" id="GO:0000329">
    <property type="term" value="C:fungal-type vacuole membrane"/>
    <property type="evidence" value="ECO:0000305"/>
    <property type="project" value="PomBase"/>
</dbReference>
<dbReference type="GO" id="GO:0016020">
    <property type="term" value="C:membrane"/>
    <property type="evidence" value="ECO:0000318"/>
    <property type="project" value="GO_Central"/>
</dbReference>
<dbReference type="GO" id="GO:0000220">
    <property type="term" value="C:vacuolar proton-transporting V-type ATPase, V0 domain"/>
    <property type="evidence" value="ECO:0000266"/>
    <property type="project" value="PomBase"/>
</dbReference>
<dbReference type="GO" id="GO:0016887">
    <property type="term" value="F:ATP hydrolysis activity"/>
    <property type="evidence" value="ECO:0000305"/>
    <property type="project" value="PomBase"/>
</dbReference>
<dbReference type="GO" id="GO:0046961">
    <property type="term" value="F:proton-transporting ATPase activity, rotational mechanism"/>
    <property type="evidence" value="ECO:0000304"/>
    <property type="project" value="PomBase"/>
</dbReference>
<dbReference type="GO" id="GO:1902600">
    <property type="term" value="P:proton transmembrane transport"/>
    <property type="evidence" value="ECO:0000266"/>
    <property type="project" value="PomBase"/>
</dbReference>
<dbReference type="CDD" id="cd18175">
    <property type="entry name" value="ATP-synt_Vo_c_ATP6C_rpt1"/>
    <property type="match status" value="1"/>
</dbReference>
<dbReference type="CDD" id="cd18176">
    <property type="entry name" value="ATP-synt_Vo_c_ATP6C_rpt2"/>
    <property type="match status" value="1"/>
</dbReference>
<dbReference type="FunFam" id="1.20.120.610:FF:000001">
    <property type="entry name" value="V-type proton ATPase proteolipid subunit"/>
    <property type="match status" value="1"/>
</dbReference>
<dbReference type="Gene3D" id="1.20.120.610">
    <property type="entry name" value="lithium bound rotor ring of v- atpase"/>
    <property type="match status" value="1"/>
</dbReference>
<dbReference type="InterPro" id="IPR002379">
    <property type="entry name" value="ATPase_proteolipid_c-like_dom"/>
</dbReference>
<dbReference type="InterPro" id="IPR000245">
    <property type="entry name" value="ATPase_proteolipid_csu"/>
</dbReference>
<dbReference type="InterPro" id="IPR011555">
    <property type="entry name" value="ATPase_proteolipid_su_C_euk"/>
</dbReference>
<dbReference type="InterPro" id="IPR035921">
    <property type="entry name" value="F/V-ATP_Csub_sf"/>
</dbReference>
<dbReference type="NCBIfam" id="TIGR01100">
    <property type="entry name" value="V_ATP_synt_C"/>
    <property type="match status" value="1"/>
</dbReference>
<dbReference type="PANTHER" id="PTHR10263">
    <property type="entry name" value="V-TYPE PROTON ATPASE PROTEOLIPID SUBUNIT"/>
    <property type="match status" value="1"/>
</dbReference>
<dbReference type="Pfam" id="PF00137">
    <property type="entry name" value="ATP-synt_C"/>
    <property type="match status" value="2"/>
</dbReference>
<dbReference type="PRINTS" id="PR00122">
    <property type="entry name" value="VACATPASE"/>
</dbReference>
<dbReference type="SUPFAM" id="SSF81333">
    <property type="entry name" value="F1F0 ATP synthase subunit C"/>
    <property type="match status" value="1"/>
</dbReference>
<accession>P50515</accession>
<reference key="1">
    <citation type="journal article" date="1991" name="Yeast">
        <title>A genomic sequence of the Schizosaccharomyces pombe 16 kDa vacuolar H(+)-ATPase.</title>
        <authorList>
            <person name="Toyama R."/>
            <person name="Goldstein D.J."/>
            <person name="Schlegel R."/>
            <person name="Dhar R."/>
        </authorList>
    </citation>
    <scope>NUCLEOTIDE SEQUENCE [GENOMIC DNA]</scope>
</reference>
<reference key="2">
    <citation type="journal article" date="2002" name="Nature">
        <title>The genome sequence of Schizosaccharomyces pombe.</title>
        <authorList>
            <person name="Wood V."/>
            <person name="Gwilliam R."/>
            <person name="Rajandream M.A."/>
            <person name="Lyne M.H."/>
            <person name="Lyne R."/>
            <person name="Stewart A."/>
            <person name="Sgouros J.G."/>
            <person name="Peat N."/>
            <person name="Hayles J."/>
            <person name="Baker S.G."/>
            <person name="Basham D."/>
            <person name="Bowman S."/>
            <person name="Brooks K."/>
            <person name="Brown D."/>
            <person name="Brown S."/>
            <person name="Chillingworth T."/>
            <person name="Churcher C.M."/>
            <person name="Collins M."/>
            <person name="Connor R."/>
            <person name="Cronin A."/>
            <person name="Davis P."/>
            <person name="Feltwell T."/>
            <person name="Fraser A."/>
            <person name="Gentles S."/>
            <person name="Goble A."/>
            <person name="Hamlin N."/>
            <person name="Harris D.E."/>
            <person name="Hidalgo J."/>
            <person name="Hodgson G."/>
            <person name="Holroyd S."/>
            <person name="Hornsby T."/>
            <person name="Howarth S."/>
            <person name="Huckle E.J."/>
            <person name="Hunt S."/>
            <person name="Jagels K."/>
            <person name="James K.D."/>
            <person name="Jones L."/>
            <person name="Jones M."/>
            <person name="Leather S."/>
            <person name="McDonald S."/>
            <person name="McLean J."/>
            <person name="Mooney P."/>
            <person name="Moule S."/>
            <person name="Mungall K.L."/>
            <person name="Murphy L.D."/>
            <person name="Niblett D."/>
            <person name="Odell C."/>
            <person name="Oliver K."/>
            <person name="O'Neil S."/>
            <person name="Pearson D."/>
            <person name="Quail M.A."/>
            <person name="Rabbinowitsch E."/>
            <person name="Rutherford K.M."/>
            <person name="Rutter S."/>
            <person name="Saunders D."/>
            <person name="Seeger K."/>
            <person name="Sharp S."/>
            <person name="Skelton J."/>
            <person name="Simmonds M.N."/>
            <person name="Squares R."/>
            <person name="Squares S."/>
            <person name="Stevens K."/>
            <person name="Taylor K."/>
            <person name="Taylor R.G."/>
            <person name="Tivey A."/>
            <person name="Walsh S.V."/>
            <person name="Warren T."/>
            <person name="Whitehead S."/>
            <person name="Woodward J.R."/>
            <person name="Volckaert G."/>
            <person name="Aert R."/>
            <person name="Robben J."/>
            <person name="Grymonprez B."/>
            <person name="Weltjens I."/>
            <person name="Vanstreels E."/>
            <person name="Rieger M."/>
            <person name="Schaefer M."/>
            <person name="Mueller-Auer S."/>
            <person name="Gabel C."/>
            <person name="Fuchs M."/>
            <person name="Duesterhoeft A."/>
            <person name="Fritzc C."/>
            <person name="Holzer E."/>
            <person name="Moestl D."/>
            <person name="Hilbert H."/>
            <person name="Borzym K."/>
            <person name="Langer I."/>
            <person name="Beck A."/>
            <person name="Lehrach H."/>
            <person name="Reinhardt R."/>
            <person name="Pohl T.M."/>
            <person name="Eger P."/>
            <person name="Zimmermann W."/>
            <person name="Wedler H."/>
            <person name="Wambutt R."/>
            <person name="Purnelle B."/>
            <person name="Goffeau A."/>
            <person name="Cadieu E."/>
            <person name="Dreano S."/>
            <person name="Gloux S."/>
            <person name="Lelaure V."/>
            <person name="Mottier S."/>
            <person name="Galibert F."/>
            <person name="Aves S.J."/>
            <person name="Xiang Z."/>
            <person name="Hunt C."/>
            <person name="Moore K."/>
            <person name="Hurst S.M."/>
            <person name="Lucas M."/>
            <person name="Rochet M."/>
            <person name="Gaillardin C."/>
            <person name="Tallada V.A."/>
            <person name="Garzon A."/>
            <person name="Thode G."/>
            <person name="Daga R.R."/>
            <person name="Cruzado L."/>
            <person name="Jimenez J."/>
            <person name="Sanchez M."/>
            <person name="del Rey F."/>
            <person name="Benito J."/>
            <person name="Dominguez A."/>
            <person name="Revuelta J.L."/>
            <person name="Moreno S."/>
            <person name="Armstrong J."/>
            <person name="Forsburg S.L."/>
            <person name="Cerutti L."/>
            <person name="Lowe T."/>
            <person name="McCombie W.R."/>
            <person name="Paulsen I."/>
            <person name="Potashkin J."/>
            <person name="Shpakovski G.V."/>
            <person name="Ussery D."/>
            <person name="Barrell B.G."/>
            <person name="Nurse P."/>
        </authorList>
    </citation>
    <scope>NUCLEOTIDE SEQUENCE [LARGE SCALE GENOMIC DNA]</scope>
    <source>
        <strain>972 / ATCC 24843</strain>
    </source>
</reference>
<organism>
    <name type="scientific">Schizosaccharomyces pombe (strain 972 / ATCC 24843)</name>
    <name type="common">Fission yeast</name>
    <dbReference type="NCBI Taxonomy" id="284812"/>
    <lineage>
        <taxon>Eukaryota</taxon>
        <taxon>Fungi</taxon>
        <taxon>Dikarya</taxon>
        <taxon>Ascomycota</taxon>
        <taxon>Taphrinomycotina</taxon>
        <taxon>Schizosaccharomycetes</taxon>
        <taxon>Schizosaccharomycetales</taxon>
        <taxon>Schizosaccharomycetaceae</taxon>
        <taxon>Schizosaccharomyces</taxon>
    </lineage>
</organism>
<name>VATL1_SCHPO</name>
<gene>
    <name evidence="4" type="primary">vma3</name>
    <name evidence="4" type="ORF">SPAC1B3.14</name>
</gene>
<keyword id="KW-0375">Hydrogen ion transport</keyword>
<keyword id="KW-0406">Ion transport</keyword>
<keyword id="KW-0472">Membrane</keyword>
<keyword id="KW-1185">Reference proteome</keyword>
<keyword id="KW-0812">Transmembrane</keyword>
<keyword id="KW-1133">Transmembrane helix</keyword>
<keyword id="KW-0813">Transport</keyword>
<keyword id="KW-0926">Vacuole</keyword>
<evidence type="ECO:0000250" key="1">
    <source>
        <dbReference type="UniProtKB" id="P25515"/>
    </source>
</evidence>
<evidence type="ECO:0000255" key="2"/>
<evidence type="ECO:0000305" key="3"/>
<evidence type="ECO:0000312" key="4">
    <source>
        <dbReference type="PomBase" id="SPAC1B3.14"/>
    </source>
</evidence>